<name>TRPD_CLOK5</name>
<organism>
    <name type="scientific">Clostridium kluyveri (strain ATCC 8527 / DSM 555 / NBRC 12016 / NCIMB 10680 / K1)</name>
    <dbReference type="NCBI Taxonomy" id="431943"/>
    <lineage>
        <taxon>Bacteria</taxon>
        <taxon>Bacillati</taxon>
        <taxon>Bacillota</taxon>
        <taxon>Clostridia</taxon>
        <taxon>Eubacteriales</taxon>
        <taxon>Clostridiaceae</taxon>
        <taxon>Clostridium</taxon>
    </lineage>
</organism>
<accession>A5N7N7</accession>
<protein>
    <recommendedName>
        <fullName evidence="1">Anthranilate phosphoribosyltransferase</fullName>
        <ecNumber evidence="1">2.4.2.18</ecNumber>
    </recommendedName>
</protein>
<comment type="function">
    <text evidence="1">Catalyzes the transfer of the phosphoribosyl group of 5-phosphorylribose-1-pyrophosphate (PRPP) to anthranilate to yield N-(5'-phosphoribosyl)-anthranilate (PRA).</text>
</comment>
<comment type="catalytic activity">
    <reaction evidence="1">
        <text>N-(5-phospho-beta-D-ribosyl)anthranilate + diphosphate = 5-phospho-alpha-D-ribose 1-diphosphate + anthranilate</text>
        <dbReference type="Rhea" id="RHEA:11768"/>
        <dbReference type="ChEBI" id="CHEBI:16567"/>
        <dbReference type="ChEBI" id="CHEBI:18277"/>
        <dbReference type="ChEBI" id="CHEBI:33019"/>
        <dbReference type="ChEBI" id="CHEBI:58017"/>
        <dbReference type="EC" id="2.4.2.18"/>
    </reaction>
</comment>
<comment type="cofactor">
    <cofactor evidence="1">
        <name>Mg(2+)</name>
        <dbReference type="ChEBI" id="CHEBI:18420"/>
    </cofactor>
    <text evidence="1">Binds 2 magnesium ions per monomer.</text>
</comment>
<comment type="pathway">
    <text evidence="1">Amino-acid biosynthesis; L-tryptophan biosynthesis; L-tryptophan from chorismate: step 2/5.</text>
</comment>
<comment type="subunit">
    <text evidence="1">Homodimer.</text>
</comment>
<comment type="similarity">
    <text evidence="1">Belongs to the anthranilate phosphoribosyltransferase family.</text>
</comment>
<dbReference type="EC" id="2.4.2.18" evidence="1"/>
<dbReference type="EMBL" id="CP000673">
    <property type="protein sequence ID" value="EDK33318.1"/>
    <property type="molecule type" value="Genomic_DNA"/>
</dbReference>
<dbReference type="RefSeq" id="WP_012101663.1">
    <property type="nucleotide sequence ID" value="NC_009706.1"/>
</dbReference>
<dbReference type="SMR" id="A5N7N7"/>
<dbReference type="STRING" id="431943.CKL_1276"/>
<dbReference type="KEGG" id="ckl:CKL_1276"/>
<dbReference type="eggNOG" id="COG0547">
    <property type="taxonomic scope" value="Bacteria"/>
</dbReference>
<dbReference type="HOGENOM" id="CLU_034315_2_1_9"/>
<dbReference type="UniPathway" id="UPA00035">
    <property type="reaction ID" value="UER00041"/>
</dbReference>
<dbReference type="Proteomes" id="UP000002411">
    <property type="component" value="Chromosome"/>
</dbReference>
<dbReference type="GO" id="GO:0005829">
    <property type="term" value="C:cytosol"/>
    <property type="evidence" value="ECO:0007669"/>
    <property type="project" value="TreeGrafter"/>
</dbReference>
<dbReference type="GO" id="GO:0004048">
    <property type="term" value="F:anthranilate phosphoribosyltransferase activity"/>
    <property type="evidence" value="ECO:0007669"/>
    <property type="project" value="UniProtKB-UniRule"/>
</dbReference>
<dbReference type="GO" id="GO:0000287">
    <property type="term" value="F:magnesium ion binding"/>
    <property type="evidence" value="ECO:0007669"/>
    <property type="project" value="UniProtKB-UniRule"/>
</dbReference>
<dbReference type="GO" id="GO:0000162">
    <property type="term" value="P:L-tryptophan biosynthetic process"/>
    <property type="evidence" value="ECO:0007669"/>
    <property type="project" value="UniProtKB-UniRule"/>
</dbReference>
<dbReference type="FunFam" id="3.40.1030.10:FF:000002">
    <property type="entry name" value="Anthranilate phosphoribosyltransferase"/>
    <property type="match status" value="1"/>
</dbReference>
<dbReference type="Gene3D" id="3.40.1030.10">
    <property type="entry name" value="Nucleoside phosphorylase/phosphoribosyltransferase catalytic domain"/>
    <property type="match status" value="1"/>
</dbReference>
<dbReference type="Gene3D" id="1.20.970.10">
    <property type="entry name" value="Transferase, Pyrimidine Nucleoside Phosphorylase, Chain C"/>
    <property type="match status" value="1"/>
</dbReference>
<dbReference type="HAMAP" id="MF_00211">
    <property type="entry name" value="TrpD"/>
    <property type="match status" value="1"/>
</dbReference>
<dbReference type="InterPro" id="IPR005940">
    <property type="entry name" value="Anthranilate_Pribosyl_Tfrase"/>
</dbReference>
<dbReference type="InterPro" id="IPR000312">
    <property type="entry name" value="Glycosyl_Trfase_fam3"/>
</dbReference>
<dbReference type="InterPro" id="IPR017459">
    <property type="entry name" value="Glycosyl_Trfase_fam3_N_dom"/>
</dbReference>
<dbReference type="InterPro" id="IPR036320">
    <property type="entry name" value="Glycosyl_Trfase_fam3_N_dom_sf"/>
</dbReference>
<dbReference type="InterPro" id="IPR035902">
    <property type="entry name" value="Nuc_phospho_transferase"/>
</dbReference>
<dbReference type="NCBIfam" id="TIGR01245">
    <property type="entry name" value="trpD"/>
    <property type="match status" value="1"/>
</dbReference>
<dbReference type="PANTHER" id="PTHR43285">
    <property type="entry name" value="ANTHRANILATE PHOSPHORIBOSYLTRANSFERASE"/>
    <property type="match status" value="1"/>
</dbReference>
<dbReference type="PANTHER" id="PTHR43285:SF2">
    <property type="entry name" value="ANTHRANILATE PHOSPHORIBOSYLTRANSFERASE"/>
    <property type="match status" value="1"/>
</dbReference>
<dbReference type="Pfam" id="PF02885">
    <property type="entry name" value="Glycos_trans_3N"/>
    <property type="match status" value="1"/>
</dbReference>
<dbReference type="Pfam" id="PF00591">
    <property type="entry name" value="Glycos_transf_3"/>
    <property type="match status" value="1"/>
</dbReference>
<dbReference type="SUPFAM" id="SSF52418">
    <property type="entry name" value="Nucleoside phosphorylase/phosphoribosyltransferase catalytic domain"/>
    <property type="match status" value="1"/>
</dbReference>
<dbReference type="SUPFAM" id="SSF47648">
    <property type="entry name" value="Nucleoside phosphorylase/phosphoribosyltransferase N-terminal domain"/>
    <property type="match status" value="1"/>
</dbReference>
<feature type="chain" id="PRO_1000078011" description="Anthranilate phosphoribosyltransferase">
    <location>
        <begin position="1"/>
        <end position="335"/>
    </location>
</feature>
<feature type="binding site" evidence="1">
    <location>
        <position position="80"/>
    </location>
    <ligand>
        <name>5-phospho-alpha-D-ribose 1-diphosphate</name>
        <dbReference type="ChEBI" id="CHEBI:58017"/>
    </ligand>
</feature>
<feature type="binding site" evidence="1">
    <location>
        <position position="80"/>
    </location>
    <ligand>
        <name>anthranilate</name>
        <dbReference type="ChEBI" id="CHEBI:16567"/>
        <label>1</label>
    </ligand>
</feature>
<feature type="binding site" evidence="1">
    <location>
        <begin position="83"/>
        <end position="84"/>
    </location>
    <ligand>
        <name>5-phospho-alpha-D-ribose 1-diphosphate</name>
        <dbReference type="ChEBI" id="CHEBI:58017"/>
    </ligand>
</feature>
<feature type="binding site" evidence="1">
    <location>
        <position position="88"/>
    </location>
    <ligand>
        <name>5-phospho-alpha-D-ribose 1-diphosphate</name>
        <dbReference type="ChEBI" id="CHEBI:58017"/>
    </ligand>
</feature>
<feature type="binding site" evidence="1">
    <location>
        <begin position="90"/>
        <end position="93"/>
    </location>
    <ligand>
        <name>5-phospho-alpha-D-ribose 1-diphosphate</name>
        <dbReference type="ChEBI" id="CHEBI:58017"/>
    </ligand>
</feature>
<feature type="binding site" evidence="1">
    <location>
        <position position="92"/>
    </location>
    <ligand>
        <name>Mg(2+)</name>
        <dbReference type="ChEBI" id="CHEBI:18420"/>
        <label>1</label>
    </ligand>
</feature>
<feature type="binding site" evidence="1">
    <location>
        <begin position="108"/>
        <end position="116"/>
    </location>
    <ligand>
        <name>5-phospho-alpha-D-ribose 1-diphosphate</name>
        <dbReference type="ChEBI" id="CHEBI:58017"/>
    </ligand>
</feature>
<feature type="binding site" evidence="1">
    <location>
        <position position="111"/>
    </location>
    <ligand>
        <name>anthranilate</name>
        <dbReference type="ChEBI" id="CHEBI:16567"/>
        <label>1</label>
    </ligand>
</feature>
<feature type="binding site" evidence="1">
    <location>
        <position position="120"/>
    </location>
    <ligand>
        <name>5-phospho-alpha-D-ribose 1-diphosphate</name>
        <dbReference type="ChEBI" id="CHEBI:58017"/>
    </ligand>
</feature>
<feature type="binding site" evidence="1">
    <location>
        <position position="166"/>
    </location>
    <ligand>
        <name>anthranilate</name>
        <dbReference type="ChEBI" id="CHEBI:16567"/>
        <label>2</label>
    </ligand>
</feature>
<feature type="binding site" evidence="1">
    <location>
        <position position="225"/>
    </location>
    <ligand>
        <name>Mg(2+)</name>
        <dbReference type="ChEBI" id="CHEBI:18420"/>
        <label>2</label>
    </ligand>
</feature>
<feature type="binding site" evidence="1">
    <location>
        <position position="226"/>
    </location>
    <ligand>
        <name>Mg(2+)</name>
        <dbReference type="ChEBI" id="CHEBI:18420"/>
        <label>1</label>
    </ligand>
</feature>
<feature type="binding site" evidence="1">
    <location>
        <position position="226"/>
    </location>
    <ligand>
        <name>Mg(2+)</name>
        <dbReference type="ChEBI" id="CHEBI:18420"/>
        <label>2</label>
    </ligand>
</feature>
<reference key="1">
    <citation type="journal article" date="2008" name="Proc. Natl. Acad. Sci. U.S.A.">
        <title>The genome of Clostridium kluyveri, a strict anaerobe with unique metabolic features.</title>
        <authorList>
            <person name="Seedorf H."/>
            <person name="Fricke W.F."/>
            <person name="Veith B."/>
            <person name="Brueggemann H."/>
            <person name="Liesegang H."/>
            <person name="Strittmatter A."/>
            <person name="Miethke M."/>
            <person name="Buckel W."/>
            <person name="Hinderberger J."/>
            <person name="Li F."/>
            <person name="Hagemeier C."/>
            <person name="Thauer R.K."/>
            <person name="Gottschalk G."/>
        </authorList>
    </citation>
    <scope>NUCLEOTIDE SEQUENCE [LARGE SCALE GENOMIC DNA]</scope>
    <source>
        <strain>ATCC 8527 / DSM 555 / NBRC 12016 / NCIMB 10680 / K1</strain>
    </source>
</reference>
<keyword id="KW-0028">Amino-acid biosynthesis</keyword>
<keyword id="KW-0057">Aromatic amino acid biosynthesis</keyword>
<keyword id="KW-0328">Glycosyltransferase</keyword>
<keyword id="KW-0460">Magnesium</keyword>
<keyword id="KW-0479">Metal-binding</keyword>
<keyword id="KW-1185">Reference proteome</keyword>
<keyword id="KW-0808">Transferase</keyword>
<keyword id="KW-0822">Tryptophan biosynthesis</keyword>
<evidence type="ECO:0000255" key="1">
    <source>
        <dbReference type="HAMAP-Rule" id="MF_00211"/>
    </source>
</evidence>
<gene>
    <name evidence="1" type="primary">trpD</name>
    <name type="ordered locus">CKL_1276</name>
</gene>
<sequence length="335" mass="35757">MLNEAIKEVLSGKDLSESQSEQVMENIMNGQESSALIAGFLIALKMKGESIPEITGCAKAMRNMAVPVKLKSQYAIDTCGTGGDGGRTFNISTAAAIIAASAGVKVAKHGNRAVSSQSGSADVLKELGININLEKSKVEHCIDNVGMGFLFAPSYHSAMKNVAGIRRDLGVRTIFNILGPLTNPAFVKGQVMGVYDRKLLEPAAKTLLNLGCERAMVVHGGDGLDEITTTTVTYVCEVKDGEIRKYTLSPGDFGIKTTFYKNIAGGTARENAAIIMDILKGKTGPERDIVVLNSAAAIYIGKKAEDLKEGILRANELIDSGKAYAKYEEILNYNN</sequence>
<proteinExistence type="inferred from homology"/>